<reference key="1">
    <citation type="journal article" date="1996" name="Genomics">
        <title>A novel human gene encoding a G-protein-coupled receptor (GPR15) is located on chromosome 3.</title>
        <authorList>
            <person name="Heiber M."/>
            <person name="Marchese A."/>
            <person name="Nguyen T."/>
            <person name="Heng H.H.Q."/>
            <person name="George S.R."/>
            <person name="O'Dowd B.F."/>
        </authorList>
    </citation>
    <scope>NUCLEOTIDE SEQUENCE [GENOMIC DNA]</scope>
</reference>
<reference key="2">
    <citation type="journal article" date="2004" name="Genome Res.">
        <title>The status, quality, and expansion of the NIH full-length cDNA project: the Mammalian Gene Collection (MGC).</title>
        <authorList>
            <consortium name="The MGC Project Team"/>
        </authorList>
    </citation>
    <scope>NUCLEOTIDE SEQUENCE [LARGE SCALE MRNA]</scope>
    <source>
        <tissue>Liver</tissue>
    </source>
</reference>
<reference key="3">
    <citation type="journal article" date="1998" name="Virology">
        <title>Use of GPR1, GPR15, and STRL33 as coreceptors by diverse human immunodeficiency virus type 1 and simian immunodeficiency virus envelope proteins.</title>
        <authorList>
            <person name="Edinger A.L."/>
            <person name="Hoffman T.L."/>
            <person name="Sharron M."/>
            <person name="Lee B."/>
            <person name="O'Dowd B."/>
            <person name="Doms R.W."/>
        </authorList>
    </citation>
    <scope>FUNCTION (MICROBIAL INFECTION)</scope>
    <scope>TISSUE SPECIFICITY</scope>
</reference>
<reference key="4">
    <citation type="journal article" date="2011" name="J. Biol. Chem.">
        <title>Phosphorylation-dependent C-terminal binding of 14-3-3 proteins promotes cell surface expression of HIV co-receptor GPR15.</title>
        <authorList>
            <person name="Okamoto Y."/>
            <person name="Shikano S."/>
        </authorList>
    </citation>
    <scope>GLYCOSYLATION</scope>
    <scope>MUTAGENESIS OF ARG-356 AND SER-359</scope>
    <scope>SUBCELLULAR LOCATION</scope>
    <scope>INTERACTION WITH YWHAE</scope>
    <scope>PHOSPHORYLATION AT SER-359</scope>
</reference>
<reference key="5">
    <citation type="journal article" date="2021" name="J. Cell Sci.">
        <title>Tyrosine sulfation and O-glycosylation of chemoattractant receptor GPR15 differentially regulate interaction with GPR15L.</title>
        <authorList>
            <person name="Okamoto Y."/>
            <person name="Shikano S."/>
        </authorList>
    </citation>
    <scope>FUNCTION</scope>
    <scope>SULFATION</scope>
    <scope>GLYCOSYLATION</scope>
</reference>
<reference key="6">
    <citation type="journal article" date="2022" name="Basic Clin. Pharmacol. Toxicol.">
        <title>Delineation of the GPR15 receptor-mediated Galpha protein signalling profile in recombinant mammalian cells.</title>
        <authorList>
            <person name="Deng Y."/>
            <person name="Moo E.V."/>
            <person name="Almeria C.V.P."/>
            <person name="Gentry P.R."/>
            <person name="Vedel L."/>
            <person name="Mathiesen J.M."/>
            <person name="Braeuner-Osborne H."/>
        </authorList>
    </citation>
    <scope>FUNCTION</scope>
</reference>
<reference key="7">
    <citation type="journal article" date="2024" name="Cell Discov.">
        <title>Molecular recognition of the atypical chemokine-like peptide GPR15L by its cognate receptor GPR15.</title>
        <authorList>
            <person name="Zhang Z."/>
            <person name="Zheng Y."/>
            <person name="Xu L."/>
            <person name="Yue Y."/>
            <person name="Xu K."/>
            <person name="Li F."/>
            <person name="Xu F."/>
        </authorList>
    </citation>
    <scope>FUNCTION</scope>
    <scope>INTERACTION WITH GNAI1</scope>
    <scope>MUTAGENESIS OF TYR-40 AND LYS-261</scope>
</reference>
<name>GPR15_HUMAN</name>
<organism>
    <name type="scientific">Homo sapiens</name>
    <name type="common">Human</name>
    <dbReference type="NCBI Taxonomy" id="9606"/>
    <lineage>
        <taxon>Eukaryota</taxon>
        <taxon>Metazoa</taxon>
        <taxon>Chordata</taxon>
        <taxon>Craniata</taxon>
        <taxon>Vertebrata</taxon>
        <taxon>Euteleostomi</taxon>
        <taxon>Mammalia</taxon>
        <taxon>Eutheria</taxon>
        <taxon>Euarchontoglires</taxon>
        <taxon>Primates</taxon>
        <taxon>Haplorrhini</taxon>
        <taxon>Catarrhini</taxon>
        <taxon>Hominidae</taxon>
        <taxon>Homo</taxon>
    </lineage>
</organism>
<accession>P49685</accession>
<accession>Q3MIL4</accession>
<accession>Q6ISN6</accession>
<keyword id="KW-0002">3D-structure</keyword>
<keyword id="KW-1003">Cell membrane</keyword>
<keyword id="KW-0297">G-protein coupled receptor</keyword>
<keyword id="KW-0472">Membrane</keyword>
<keyword id="KW-0597">Phosphoprotein</keyword>
<keyword id="KW-1267">Proteomics identification</keyword>
<keyword id="KW-0675">Receptor</keyword>
<keyword id="KW-1185">Reference proteome</keyword>
<keyword id="KW-0807">Transducer</keyword>
<keyword id="KW-0812">Transmembrane</keyword>
<keyword id="KW-1133">Transmembrane helix</keyword>
<sequence length="360" mass="40787">MDPEETSVYLDYYYATSPNSDIRETHSHVPYTSVFLPVFYTAVFLTGVLGNLVLMGALHFKPGSRRLIDIFIINLAASDFIFLVTLPLWVDKEASLGLWRTGSFLCKGSSYMISVNMHCSVLLLTCMSVDRYLAIVWPVVSRKFRRTDCAYVVCASIWFISCLLGLPTLLSRELTLIDDKPYCAEKKATPIKLIWSLVALIFTFFVPLLSIVTCYCCIARKLCAHYQQSGKHNKKLKKSIKIIFIVVAAFLVSWLPFNTFKFLAIVSGLRQEHYLPSAILQLGMEVSGPLAFANSCVNPFIYYIFDSYIRRAIVHCLCPCLKNYDFGSSTETSDSHLTKALSTFIHAEDFARRRKRSVSL</sequence>
<comment type="function">
    <text evidence="1 5 6 7">G protein-coupled receptor that plays an important role in immune homeostasis (PubMed:33758080, PubMed:38918398). Acts via its natural ligand GPR15LG, a chemokine-like polypeptide strongly expressed in gastrointestinal tissues. GPR15-GPR15LG signaling axis regulates intestinal homeostasis and inflammation through the migration of immune cells (PubMed:33758080, PubMed:38918398). Controls thereby the specific homing of T-cells, particularly FOXP3+ regulatory T-cells (Tregs), to the large intestine lamina propria (By similarity). Also required for skin localization of thymus-derived dendritic epidermal T-cells (By similarity). Plays an important role in mediating cytoprotective function as well as angiogenesis of thrombomodulin (By similarity). Mechanistically, preferentially signals through the Gi/o pathway to inhibit adenylate cyclase activity and activate a phosphatidylinositol-calcium second messenger system that regulates the release of Ca(2+) ions from intracellular stores (PubMed:35510660).</text>
</comment>
<comment type="function">
    <text evidence="8">(Microbial infection) Acts as an alternative coreceptor with CD4 for HIV-1 infection.</text>
</comment>
<comment type="subunit">
    <text evidence="4">Interacts with adapter YWHAE; this interaction promotes ER-to-Golgi transport of GPR15. Interacts with GNAI1; this interaction initiates the signaling pathway.</text>
</comment>
<comment type="subcellular location">
    <subcellularLocation>
        <location evidence="4">Cell membrane</location>
        <topology>Multi-pass membrane protein</topology>
    </subcellularLocation>
</comment>
<comment type="tissue specificity">
    <text evidence="8">Highly expressed in lymphoid tissues, including macrophages and peripheral blood mononuclear cells.</text>
</comment>
<comment type="PTM">
    <text evidence="4">Phosphorylation is necessary for YWHAE binding and efficient surface expression.</text>
</comment>
<comment type="PTM">
    <text evidence="4 5">O-glycosylated (PubMed:21189250). Sialylated O-glycans in the N-terminal tail inhibits binding of GPR15LG (PubMed:33758080).</text>
</comment>
<comment type="PTM">
    <text evidence="5">Sulfation is required for efficient binding of GPR15LG.</text>
</comment>
<comment type="similarity">
    <text evidence="3">Belongs to the G-protein coupled receptor 1 family.</text>
</comment>
<proteinExistence type="evidence at protein level"/>
<gene>
    <name type="primary">GPR15</name>
</gene>
<feature type="chain" id="PRO_0000069531" description="G-protein coupled receptor 15">
    <location>
        <begin position="1"/>
        <end position="360"/>
    </location>
</feature>
<feature type="topological domain" description="Extracellular" evidence="2">
    <location>
        <begin position="1"/>
        <end position="33"/>
    </location>
</feature>
<feature type="transmembrane region" description="Helical; Name=1" evidence="2">
    <location>
        <begin position="34"/>
        <end position="54"/>
    </location>
</feature>
<feature type="topological domain" description="Cytoplasmic" evidence="2">
    <location>
        <begin position="55"/>
        <end position="69"/>
    </location>
</feature>
<feature type="transmembrane region" description="Helical; Name=2" evidence="2">
    <location>
        <begin position="70"/>
        <end position="90"/>
    </location>
</feature>
<feature type="topological domain" description="Extracellular" evidence="2">
    <location>
        <begin position="91"/>
        <end position="120"/>
    </location>
</feature>
<feature type="transmembrane region" description="Helical; Name=3" evidence="2">
    <location>
        <begin position="121"/>
        <end position="141"/>
    </location>
</feature>
<feature type="topological domain" description="Cytoplasmic" evidence="2">
    <location>
        <begin position="142"/>
        <end position="149"/>
    </location>
</feature>
<feature type="transmembrane region" description="Helical; Name=4" evidence="2">
    <location>
        <begin position="150"/>
        <end position="170"/>
    </location>
</feature>
<feature type="topological domain" description="Extracellular" evidence="2">
    <location>
        <begin position="171"/>
        <end position="192"/>
    </location>
</feature>
<feature type="transmembrane region" description="Helical; Name=5" evidence="2">
    <location>
        <begin position="193"/>
        <end position="213"/>
    </location>
</feature>
<feature type="topological domain" description="Cytoplasmic" evidence="2">
    <location>
        <begin position="214"/>
        <end position="239"/>
    </location>
</feature>
<feature type="transmembrane region" description="Helical; Name=6" evidence="2">
    <location>
        <begin position="240"/>
        <end position="260"/>
    </location>
</feature>
<feature type="topological domain" description="Extracellular" evidence="2">
    <location>
        <begin position="261"/>
        <end position="284"/>
    </location>
</feature>
<feature type="transmembrane region" description="Helical; Name=7" evidence="2">
    <location>
        <begin position="285"/>
        <end position="305"/>
    </location>
</feature>
<feature type="topological domain" description="Cytoplasmic" evidence="2">
    <location>
        <begin position="306"/>
        <end position="360"/>
    </location>
</feature>
<feature type="modified residue" description="Phosphoserine" evidence="4">
    <location>
        <position position="359"/>
    </location>
</feature>
<feature type="sequence variant" id="VAR_020075" description="In dbSNP:rs2230344.">
    <original>P</original>
    <variation>S</variation>
    <location>
        <position position="37"/>
    </location>
</feature>
<feature type="sequence variant" id="VAR_049391" description="In dbSNP:rs35320046.">
    <original>M</original>
    <variation>V</variation>
    <location>
        <position position="112"/>
    </location>
</feature>
<feature type="mutagenesis site" description="Complete loss of ligand-induced receptor activation." evidence="7">
    <original>Y</original>
    <variation>A</variation>
    <location>
        <position position="40"/>
    </location>
</feature>
<feature type="mutagenesis site" description="Complete loss of ligand-induced receptor activation." evidence="7">
    <original>K</original>
    <variation>A</variation>
    <location>
        <position position="261"/>
    </location>
</feature>
<feature type="mutagenesis site" description="Abolished YWHAE binding." evidence="4">
    <original>R</original>
    <variation>A</variation>
    <location>
        <position position="356"/>
    </location>
</feature>
<feature type="mutagenesis site" description="Abolished YWHAE binding and substantially reduced cell surface expression." evidence="4">
    <original>S</original>
    <variation>A</variation>
    <location>
        <position position="359"/>
    </location>
</feature>
<evidence type="ECO:0000250" key="1">
    <source>
        <dbReference type="UniProtKB" id="Q0VDU3"/>
    </source>
</evidence>
<evidence type="ECO:0000255" key="2"/>
<evidence type="ECO:0000255" key="3">
    <source>
        <dbReference type="PROSITE-ProRule" id="PRU00521"/>
    </source>
</evidence>
<evidence type="ECO:0000269" key="4">
    <source>
    </source>
</evidence>
<evidence type="ECO:0000269" key="5">
    <source>
    </source>
</evidence>
<evidence type="ECO:0000269" key="6">
    <source>
    </source>
</evidence>
<evidence type="ECO:0000269" key="7">
    <source>
    </source>
</evidence>
<evidence type="ECO:0000269" key="8">
    <source>
    </source>
</evidence>
<protein>
    <recommendedName>
        <fullName>G-protein coupled receptor 15</fullName>
    </recommendedName>
    <alternativeName>
        <fullName>Brother of Bonzo</fullName>
        <shortName>BoB</shortName>
    </alternativeName>
</protein>
<dbReference type="EMBL" id="U34806">
    <property type="protein sequence ID" value="AAC50826.1"/>
    <property type="molecule type" value="Genomic_DNA"/>
</dbReference>
<dbReference type="EMBL" id="BC069437">
    <property type="protein sequence ID" value="AAH69437.1"/>
    <property type="molecule type" value="mRNA"/>
</dbReference>
<dbReference type="EMBL" id="BC101779">
    <property type="protein sequence ID" value="AAI01780.1"/>
    <property type="molecule type" value="mRNA"/>
</dbReference>
<dbReference type="EMBL" id="BC101781">
    <property type="protein sequence ID" value="AAI01782.1"/>
    <property type="molecule type" value="mRNA"/>
</dbReference>
<dbReference type="CCDS" id="CCDS2931.1"/>
<dbReference type="PIR" id="G02064">
    <property type="entry name" value="G02064"/>
</dbReference>
<dbReference type="RefSeq" id="NP_005281.1">
    <property type="nucleotide sequence ID" value="NM_005290.4"/>
</dbReference>
<dbReference type="PDB" id="8ZQE">
    <property type="method" value="EM"/>
    <property type="resolution" value="2.90 A"/>
    <property type="chains" value="R=1-360"/>
</dbReference>
<dbReference type="PDBsum" id="8ZQE"/>
<dbReference type="SMR" id="P49685"/>
<dbReference type="BioGRID" id="109098">
    <property type="interactions" value="2"/>
</dbReference>
<dbReference type="ELM" id="P49685"/>
<dbReference type="FunCoup" id="P49685">
    <property type="interactions" value="319"/>
</dbReference>
<dbReference type="STRING" id="9606.ENSP00000284311"/>
<dbReference type="ChEMBL" id="CHEMBL4523866"/>
<dbReference type="GuidetoPHARMACOLOGY" id="87"/>
<dbReference type="iPTMnet" id="P49685"/>
<dbReference type="PhosphoSitePlus" id="P49685"/>
<dbReference type="BioMuta" id="GPR15"/>
<dbReference type="DMDM" id="1346170"/>
<dbReference type="jPOST" id="P49685"/>
<dbReference type="MassIVE" id="P49685"/>
<dbReference type="PaxDb" id="9606-ENSP00000284311"/>
<dbReference type="PeptideAtlas" id="P49685"/>
<dbReference type="ProteomicsDB" id="56051"/>
<dbReference type="Antibodypedia" id="2944">
    <property type="antibodies" value="386 antibodies from 37 providers"/>
</dbReference>
<dbReference type="DNASU" id="2838"/>
<dbReference type="Ensembl" id="ENST00000284311.5">
    <property type="protein sequence ID" value="ENSP00000284311.3"/>
    <property type="gene ID" value="ENSG00000154165.5"/>
</dbReference>
<dbReference type="GeneID" id="2838"/>
<dbReference type="KEGG" id="hsa:2838"/>
<dbReference type="MANE-Select" id="ENST00000284311.5">
    <property type="protein sequence ID" value="ENSP00000284311.3"/>
    <property type="RefSeq nucleotide sequence ID" value="NM_005290.4"/>
    <property type="RefSeq protein sequence ID" value="NP_005281.1"/>
</dbReference>
<dbReference type="UCSC" id="uc011bgy.3">
    <property type="organism name" value="human"/>
</dbReference>
<dbReference type="AGR" id="HGNC:4469"/>
<dbReference type="CTD" id="2838"/>
<dbReference type="DisGeNET" id="2838"/>
<dbReference type="GeneCards" id="GPR15"/>
<dbReference type="HGNC" id="HGNC:4469">
    <property type="gene designation" value="GPR15"/>
</dbReference>
<dbReference type="HPA" id="ENSG00000154165">
    <property type="expression patterns" value="Tissue enriched (intestine)"/>
</dbReference>
<dbReference type="MIM" id="601166">
    <property type="type" value="gene"/>
</dbReference>
<dbReference type="neXtProt" id="NX_P49685"/>
<dbReference type="OpenTargets" id="ENSG00000154165"/>
<dbReference type="PharmGKB" id="PA28858"/>
<dbReference type="VEuPathDB" id="HostDB:ENSG00000154165"/>
<dbReference type="eggNOG" id="ENOG502RCE3">
    <property type="taxonomic scope" value="Eukaryota"/>
</dbReference>
<dbReference type="GeneTree" id="ENSGT01130000278303"/>
<dbReference type="HOGENOM" id="CLU_009579_8_1_1"/>
<dbReference type="InParanoid" id="P49685"/>
<dbReference type="OMA" id="LTFYCSI"/>
<dbReference type="OrthoDB" id="10037617at2759"/>
<dbReference type="PAN-GO" id="P49685">
    <property type="GO annotations" value="3 GO annotations based on evolutionary models"/>
</dbReference>
<dbReference type="PhylomeDB" id="P49685"/>
<dbReference type="TreeFam" id="TF330024"/>
<dbReference type="PathwayCommons" id="P49685"/>
<dbReference type="Reactome" id="R-HSA-418555">
    <property type="pathway name" value="G alpha (s) signalling events"/>
</dbReference>
<dbReference type="SignaLink" id="P49685"/>
<dbReference type="BioGRID-ORCS" id="2838">
    <property type="hits" value="14 hits in 1143 CRISPR screens"/>
</dbReference>
<dbReference type="GeneWiki" id="GPR15"/>
<dbReference type="GenomeRNAi" id="2838"/>
<dbReference type="Pharos" id="P49685">
    <property type="development level" value="Tbio"/>
</dbReference>
<dbReference type="PRO" id="PR:P49685"/>
<dbReference type="Proteomes" id="UP000005640">
    <property type="component" value="Chromosome 3"/>
</dbReference>
<dbReference type="RNAct" id="P49685">
    <property type="molecule type" value="protein"/>
</dbReference>
<dbReference type="Bgee" id="ENSG00000154165">
    <property type="expression patterns" value="Expressed in rectum and 72 other cell types or tissues"/>
</dbReference>
<dbReference type="ExpressionAtlas" id="P49685">
    <property type="expression patterns" value="baseline and differential"/>
</dbReference>
<dbReference type="GO" id="GO:0005737">
    <property type="term" value="C:cytoplasm"/>
    <property type="evidence" value="ECO:0000314"/>
    <property type="project" value="MGI"/>
</dbReference>
<dbReference type="GO" id="GO:0005768">
    <property type="term" value="C:endosome"/>
    <property type="evidence" value="ECO:0000314"/>
    <property type="project" value="UniProtKB"/>
</dbReference>
<dbReference type="GO" id="GO:0005886">
    <property type="term" value="C:plasma membrane"/>
    <property type="evidence" value="ECO:0000314"/>
    <property type="project" value="UniProtKB"/>
</dbReference>
<dbReference type="GO" id="GO:0015026">
    <property type="term" value="F:coreceptor activity"/>
    <property type="evidence" value="ECO:0000314"/>
    <property type="project" value="UniProtKB"/>
</dbReference>
<dbReference type="GO" id="GO:0004930">
    <property type="term" value="F:G protein-coupled receptor activity"/>
    <property type="evidence" value="ECO:0000314"/>
    <property type="project" value="UniProtKB"/>
</dbReference>
<dbReference type="GO" id="GO:0001618">
    <property type="term" value="F:virus receptor activity"/>
    <property type="evidence" value="ECO:0000314"/>
    <property type="project" value="UniProtKB"/>
</dbReference>
<dbReference type="GO" id="GO:0001525">
    <property type="term" value="P:angiogenesis"/>
    <property type="evidence" value="ECO:0000315"/>
    <property type="project" value="UniProtKB"/>
</dbReference>
<dbReference type="GO" id="GO:0007186">
    <property type="term" value="P:G protein-coupled receptor signaling pathway"/>
    <property type="evidence" value="ECO:0000314"/>
    <property type="project" value="UniProtKB"/>
</dbReference>
<dbReference type="GO" id="GO:0046718">
    <property type="term" value="P:symbiont entry into host cell"/>
    <property type="evidence" value="ECO:0000314"/>
    <property type="project" value="UniProtKB"/>
</dbReference>
<dbReference type="GO" id="GO:0072678">
    <property type="term" value="P:T cell migration"/>
    <property type="evidence" value="ECO:0007669"/>
    <property type="project" value="Ensembl"/>
</dbReference>
<dbReference type="CDD" id="cd15194">
    <property type="entry name" value="7tmA_GPR15"/>
    <property type="match status" value="1"/>
</dbReference>
<dbReference type="FunFam" id="1.20.1070.10:FF:000187">
    <property type="entry name" value="G-protein coupled receptor 15"/>
    <property type="match status" value="1"/>
</dbReference>
<dbReference type="Gene3D" id="1.20.1070.10">
    <property type="entry name" value="Rhodopsin 7-helix transmembrane proteins"/>
    <property type="match status" value="1"/>
</dbReference>
<dbReference type="InterPro" id="IPR050119">
    <property type="entry name" value="CCR1-9-like"/>
</dbReference>
<dbReference type="InterPro" id="IPR000276">
    <property type="entry name" value="GPCR_Rhodpsn"/>
</dbReference>
<dbReference type="InterPro" id="IPR017452">
    <property type="entry name" value="GPCR_Rhodpsn_7TM"/>
</dbReference>
<dbReference type="PANTHER" id="PTHR10489">
    <property type="entry name" value="CELL ADHESION MOLECULE"/>
    <property type="match status" value="1"/>
</dbReference>
<dbReference type="PANTHER" id="PTHR10489:SF954">
    <property type="entry name" value="G PROTEIN-COUPLED RECEPTOR 25"/>
    <property type="match status" value="1"/>
</dbReference>
<dbReference type="Pfam" id="PF00001">
    <property type="entry name" value="7tm_1"/>
    <property type="match status" value="1"/>
</dbReference>
<dbReference type="PRINTS" id="PR00237">
    <property type="entry name" value="GPCRRHODOPSN"/>
</dbReference>
<dbReference type="PRINTS" id="PR01157">
    <property type="entry name" value="P2YPURNOCPTR"/>
</dbReference>
<dbReference type="SMART" id="SM01381">
    <property type="entry name" value="7TM_GPCR_Srsx"/>
    <property type="match status" value="1"/>
</dbReference>
<dbReference type="SUPFAM" id="SSF81321">
    <property type="entry name" value="Family A G protein-coupled receptor-like"/>
    <property type="match status" value="1"/>
</dbReference>
<dbReference type="PROSITE" id="PS00237">
    <property type="entry name" value="G_PROTEIN_RECEP_F1_1"/>
    <property type="match status" value="1"/>
</dbReference>
<dbReference type="PROSITE" id="PS50262">
    <property type="entry name" value="G_PROTEIN_RECEP_F1_2"/>
    <property type="match status" value="1"/>
</dbReference>